<sequence length="917" mass="100355">MSNEYPYASMRDSFDLSAYFVVGPEDCKGRPLTDVVDQALHGGATFIQLRAKEADASELTDMARDIAQIIEDNEKSDSVAFVIDDRADVVWQARRKGIKVDGVHIGQTDMEPREARALLGDEAIVGLSAETESLVRLINELPDGCIDYIGAGPLHVSTTKPEASVGGNDGSGKTLDAAQINTICVASEFPVVVGGGVTAADMAMLADTKAAGWFVVSAIAGAENPEEAARTMVEGWKAVRGDKKHGYAPRVVTHTPATDTQAAQEGAAKPGSEATEKKFTNAKDAKDAQKLAKQQRVDIAARGSKQRDKAHIRKTKSVPFTYQYGSYDLEVPYTEIKLSDTPGVGPNPPFHDYNTEGPKCDPKEGLKPLRLDWIRDRGDIEDYEGRRRNLEDDGKRAIKRGRATKEWRGRKHEPMRAKDHPITQMWYARHGIITPEMQYVATRENCDVELVRSELAAGRAVMPCNINHPEAEPMIIGSAFLTKLNANMGNSAVTSSIDEEVEKLTWATKWGADTVMDLSTGNDIHTTREWILRNSPVPIGTVPMYQALEKVEDDASKLSWELFRDTVIEQCEQGVDYMTIHAGVLLRYVPLTANRVTGIVSRGGSIMADWCLRHHQESFLYTHFDELCDIFAKYDVAFSLGDGLRPGSLADANDAAQLSELMTLGELTERAWAKDVQVMIEGPGHVPFDTVRMNIELEKAVCHNAPFYTLGPLTTDTAPGYDHITSAIGATEIGRYGTAMLCYVTPKEHLGLPNKDDVKQGVIAYKIACHAADIAKHHPHAMDRDNAISKARFEFRWLDQFNLSYDPDTAIAFHDDTLPAEPAKMAHFCSMCGPKFCSMAISQNIRKAFGGEAAQQQIVKEAAAGIDSEALATAKANVDNGVVSANVLSPEEILAGMDAMSEKYTAQGGKLYSTAQE</sequence>
<proteinExistence type="inferred from homology"/>
<evidence type="ECO:0000250" key="1"/>
<evidence type="ECO:0000250" key="2">
    <source>
        <dbReference type="UniProtKB" id="P39594"/>
    </source>
</evidence>
<evidence type="ECO:0000250" key="3">
    <source>
        <dbReference type="UniProtKB" id="P45740"/>
    </source>
</evidence>
<evidence type="ECO:0000256" key="4">
    <source>
        <dbReference type="SAM" id="MobiDB-lite"/>
    </source>
</evidence>
<evidence type="ECO:0000305" key="5"/>
<name>THIEC_BIFLO</name>
<feature type="chain" id="PRO_0000152856" description="Thiamine biosynthesis bifunctional protein ThiEC">
    <location>
        <begin position="1"/>
        <end position="917"/>
    </location>
</feature>
<feature type="region of interest" description="Thiamine-phosphate synthase">
    <location>
        <begin position="1"/>
        <end position="243"/>
    </location>
</feature>
<feature type="region of interest" description="Disordered" evidence="4">
    <location>
        <begin position="256"/>
        <end position="311"/>
    </location>
</feature>
<feature type="region of interest" description="Phosphomethylpyrimidine synthase">
    <location>
        <begin position="271"/>
        <end position="917"/>
    </location>
</feature>
<feature type="compositionally biased region" description="Basic and acidic residues" evidence="4">
    <location>
        <begin position="274"/>
        <end position="290"/>
    </location>
</feature>
<feature type="binding site" evidence="1">
    <location>
        <begin position="48"/>
        <end position="52"/>
    </location>
    <ligand>
        <name>4-amino-2-methyl-5-(diphosphooxymethyl)pyrimidine</name>
        <dbReference type="ChEBI" id="CHEBI:57841"/>
    </ligand>
</feature>
<feature type="binding site" evidence="1">
    <location>
        <position position="84"/>
    </location>
    <ligand>
        <name>4-amino-2-methyl-5-(diphosphooxymethyl)pyrimidine</name>
        <dbReference type="ChEBI" id="CHEBI:57841"/>
    </ligand>
</feature>
<feature type="binding site" evidence="1">
    <location>
        <position position="85"/>
    </location>
    <ligand>
        <name>Mg(2+)</name>
        <dbReference type="ChEBI" id="CHEBI:18420"/>
    </ligand>
</feature>
<feature type="binding site" evidence="1">
    <location>
        <position position="109"/>
    </location>
    <ligand>
        <name>Mg(2+)</name>
        <dbReference type="ChEBI" id="CHEBI:18420"/>
    </ligand>
</feature>
<feature type="binding site" evidence="1">
    <location>
        <position position="128"/>
    </location>
    <ligand>
        <name>4-amino-2-methyl-5-(diphosphooxymethyl)pyrimidine</name>
        <dbReference type="ChEBI" id="CHEBI:57841"/>
    </ligand>
</feature>
<feature type="binding site" evidence="1">
    <location>
        <begin position="157"/>
        <end position="159"/>
    </location>
    <ligand>
        <name>2-[(2R,5Z)-2-carboxy-4-methylthiazol-5(2H)-ylidene]ethyl phosphate</name>
        <dbReference type="ChEBI" id="CHEBI:62899"/>
    </ligand>
</feature>
<feature type="binding site" evidence="1">
    <location>
        <position position="160"/>
    </location>
    <ligand>
        <name>4-amino-2-methyl-5-(diphosphooxymethyl)pyrimidine</name>
        <dbReference type="ChEBI" id="CHEBI:57841"/>
    </ligand>
</feature>
<feature type="binding site" evidence="1">
    <location>
        <position position="196"/>
    </location>
    <ligand>
        <name>2-[(2R,5Z)-2-carboxy-4-methylthiazol-5(2H)-ylidene]ethyl phosphate</name>
        <dbReference type="ChEBI" id="CHEBI:62899"/>
    </ligand>
</feature>
<feature type="binding site" evidence="1">
    <location>
        <begin position="216"/>
        <end position="217"/>
    </location>
    <ligand>
        <name>2-[(2R,5Z)-2-carboxy-4-methylthiazol-5(2H)-ylidene]ethyl phosphate</name>
        <dbReference type="ChEBI" id="CHEBI:62899"/>
    </ligand>
</feature>
<feature type="binding site" evidence="1">
    <location>
        <position position="487"/>
    </location>
    <ligand>
        <name>5-amino-1-(5-phospho-beta-D-ribosyl)imidazole</name>
        <dbReference type="ChEBI" id="CHEBI:137981"/>
    </ligand>
</feature>
<feature type="binding site" evidence="1">
    <location>
        <position position="516"/>
    </location>
    <ligand>
        <name>5-amino-1-(5-phospho-beta-D-ribosyl)imidazole</name>
        <dbReference type="ChEBI" id="CHEBI:137981"/>
    </ligand>
</feature>
<feature type="binding site" evidence="1">
    <location>
        <position position="545"/>
    </location>
    <ligand>
        <name>5-amino-1-(5-phospho-beta-D-ribosyl)imidazole</name>
        <dbReference type="ChEBI" id="CHEBI:137981"/>
    </ligand>
</feature>
<feature type="binding site" evidence="1">
    <location>
        <position position="581"/>
    </location>
    <ligand>
        <name>5-amino-1-(5-phospho-beta-D-ribosyl)imidazole</name>
        <dbReference type="ChEBI" id="CHEBI:137981"/>
    </ligand>
</feature>
<feature type="binding site" evidence="1">
    <location>
        <begin position="601"/>
        <end position="603"/>
    </location>
    <ligand>
        <name>5-amino-1-(5-phospho-beta-D-ribosyl)imidazole</name>
        <dbReference type="ChEBI" id="CHEBI:137981"/>
    </ligand>
</feature>
<feature type="binding site" evidence="1">
    <location>
        <begin position="642"/>
        <end position="645"/>
    </location>
    <ligand>
        <name>5-amino-1-(5-phospho-beta-D-ribosyl)imidazole</name>
        <dbReference type="ChEBI" id="CHEBI:137981"/>
    </ligand>
</feature>
<feature type="binding site" evidence="1">
    <location>
        <position position="681"/>
    </location>
    <ligand>
        <name>5-amino-1-(5-phospho-beta-D-ribosyl)imidazole</name>
        <dbReference type="ChEBI" id="CHEBI:137981"/>
    </ligand>
</feature>
<feature type="binding site" evidence="1">
    <location>
        <position position="685"/>
    </location>
    <ligand>
        <name>Zn(2+)</name>
        <dbReference type="ChEBI" id="CHEBI:29105"/>
    </ligand>
</feature>
<feature type="binding site" evidence="1">
    <location>
        <position position="708"/>
    </location>
    <ligand>
        <name>5-amino-1-(5-phospho-beta-D-ribosyl)imidazole</name>
        <dbReference type="ChEBI" id="CHEBI:137981"/>
    </ligand>
</feature>
<feature type="binding site" evidence="1">
    <location>
        <position position="749"/>
    </location>
    <ligand>
        <name>Zn(2+)</name>
        <dbReference type="ChEBI" id="CHEBI:29105"/>
    </ligand>
</feature>
<feature type="binding site" evidence="1">
    <location>
        <position position="829"/>
    </location>
    <ligand>
        <name>[4Fe-4S] cluster</name>
        <dbReference type="ChEBI" id="CHEBI:49883"/>
        <note>4Fe-4S-S-AdoMet</note>
    </ligand>
</feature>
<feature type="binding site" evidence="1">
    <location>
        <position position="832"/>
    </location>
    <ligand>
        <name>[4Fe-4S] cluster</name>
        <dbReference type="ChEBI" id="CHEBI:49883"/>
        <note>4Fe-4S-S-AdoMet</note>
    </ligand>
</feature>
<feature type="binding site" evidence="1">
    <location>
        <position position="837"/>
    </location>
    <ligand>
        <name>[4Fe-4S] cluster</name>
        <dbReference type="ChEBI" id="CHEBI:49883"/>
        <note>4Fe-4S-S-AdoMet</note>
    </ligand>
</feature>
<dbReference type="EC" id="2.5.1.3" evidence="2"/>
<dbReference type="EC" id="4.1.99.17" evidence="3"/>
<dbReference type="EMBL" id="AE014295">
    <property type="protein sequence ID" value="AAN23979.1"/>
    <property type="molecule type" value="Genomic_DNA"/>
</dbReference>
<dbReference type="RefSeq" id="NP_695343.1">
    <property type="nucleotide sequence ID" value="NC_004307.2"/>
</dbReference>
<dbReference type="SMR" id="Q8G7X1"/>
<dbReference type="STRING" id="206672.BL0114"/>
<dbReference type="EnsemblBacteria" id="AAN23979">
    <property type="protein sequence ID" value="AAN23979"/>
    <property type="gene ID" value="BL0114"/>
</dbReference>
<dbReference type="KEGG" id="blo:BL0114"/>
<dbReference type="PATRIC" id="fig|206672.9.peg.122"/>
<dbReference type="HOGENOM" id="CLU_013181_0_1_11"/>
<dbReference type="OrthoDB" id="9805897at2"/>
<dbReference type="PhylomeDB" id="Q8G7X1"/>
<dbReference type="UniPathway" id="UPA00060">
    <property type="reaction ID" value="UER00141"/>
</dbReference>
<dbReference type="Proteomes" id="UP000000439">
    <property type="component" value="Chromosome"/>
</dbReference>
<dbReference type="GO" id="GO:0005829">
    <property type="term" value="C:cytosol"/>
    <property type="evidence" value="ECO:0007669"/>
    <property type="project" value="TreeGrafter"/>
</dbReference>
<dbReference type="GO" id="GO:0051539">
    <property type="term" value="F:4 iron, 4 sulfur cluster binding"/>
    <property type="evidence" value="ECO:0007669"/>
    <property type="project" value="UniProtKB-KW"/>
</dbReference>
<dbReference type="GO" id="GO:0016830">
    <property type="term" value="F:carbon-carbon lyase activity"/>
    <property type="evidence" value="ECO:0007669"/>
    <property type="project" value="InterPro"/>
</dbReference>
<dbReference type="GO" id="GO:0000287">
    <property type="term" value="F:magnesium ion binding"/>
    <property type="evidence" value="ECO:0007669"/>
    <property type="project" value="UniProtKB-UniRule"/>
</dbReference>
<dbReference type="GO" id="GO:0004789">
    <property type="term" value="F:thiamine-phosphate diphosphorylase activity"/>
    <property type="evidence" value="ECO:0007669"/>
    <property type="project" value="UniProtKB-UniRule"/>
</dbReference>
<dbReference type="GO" id="GO:0008270">
    <property type="term" value="F:zinc ion binding"/>
    <property type="evidence" value="ECO:0007669"/>
    <property type="project" value="UniProtKB-UniRule"/>
</dbReference>
<dbReference type="GO" id="GO:0009228">
    <property type="term" value="P:thiamine biosynthetic process"/>
    <property type="evidence" value="ECO:0007669"/>
    <property type="project" value="UniProtKB-KW"/>
</dbReference>
<dbReference type="GO" id="GO:0009229">
    <property type="term" value="P:thiamine diphosphate biosynthetic process"/>
    <property type="evidence" value="ECO:0007669"/>
    <property type="project" value="UniProtKB-UniRule"/>
</dbReference>
<dbReference type="CDD" id="cd00564">
    <property type="entry name" value="TMP_TenI"/>
    <property type="match status" value="1"/>
</dbReference>
<dbReference type="FunFam" id="3.20.20.540:FF:000001">
    <property type="entry name" value="Phosphomethylpyrimidine synthase"/>
    <property type="match status" value="1"/>
</dbReference>
<dbReference type="Gene3D" id="6.10.250.620">
    <property type="match status" value="1"/>
</dbReference>
<dbReference type="Gene3D" id="3.20.20.70">
    <property type="entry name" value="Aldolase class I"/>
    <property type="match status" value="1"/>
</dbReference>
<dbReference type="Gene3D" id="3.20.20.540">
    <property type="entry name" value="Radical SAM ThiC family, central domain"/>
    <property type="match status" value="1"/>
</dbReference>
<dbReference type="HAMAP" id="MF_00089">
    <property type="entry name" value="ThiC"/>
    <property type="match status" value="1"/>
</dbReference>
<dbReference type="HAMAP" id="MF_00097">
    <property type="entry name" value="TMP_synthase"/>
    <property type="match status" value="1"/>
</dbReference>
<dbReference type="InterPro" id="IPR013785">
    <property type="entry name" value="Aldolase_TIM"/>
</dbReference>
<dbReference type="InterPro" id="IPR036206">
    <property type="entry name" value="ThiamineP_synth_sf"/>
</dbReference>
<dbReference type="InterPro" id="IPR022998">
    <property type="entry name" value="ThiamineP_synth_TenI"/>
</dbReference>
<dbReference type="InterPro" id="IPR037509">
    <property type="entry name" value="ThiC"/>
</dbReference>
<dbReference type="InterPro" id="IPR038521">
    <property type="entry name" value="ThiC/Bza_core_dom"/>
</dbReference>
<dbReference type="InterPro" id="IPR002817">
    <property type="entry name" value="ThiC/BzaA/B"/>
</dbReference>
<dbReference type="InterPro" id="IPR034291">
    <property type="entry name" value="TMP_synthase"/>
</dbReference>
<dbReference type="NCBIfam" id="NF006763">
    <property type="entry name" value="PRK09284.1"/>
    <property type="match status" value="1"/>
</dbReference>
<dbReference type="NCBIfam" id="NF009895">
    <property type="entry name" value="PRK13352.1"/>
    <property type="match status" value="1"/>
</dbReference>
<dbReference type="NCBIfam" id="TIGR00190">
    <property type="entry name" value="thiC"/>
    <property type="match status" value="1"/>
</dbReference>
<dbReference type="PANTHER" id="PTHR30557:SF1">
    <property type="entry name" value="PHOSPHOMETHYLPYRIMIDINE SYNTHASE, CHLOROPLASTIC"/>
    <property type="match status" value="1"/>
</dbReference>
<dbReference type="PANTHER" id="PTHR30557">
    <property type="entry name" value="THIAMINE BIOSYNTHESIS PROTEIN THIC"/>
    <property type="match status" value="1"/>
</dbReference>
<dbReference type="Pfam" id="PF01964">
    <property type="entry name" value="ThiC_Rad_SAM"/>
    <property type="match status" value="1"/>
</dbReference>
<dbReference type="Pfam" id="PF02581">
    <property type="entry name" value="TMP-TENI"/>
    <property type="match status" value="1"/>
</dbReference>
<dbReference type="SFLD" id="SFLDF00407">
    <property type="entry name" value="phosphomethylpyrimidine_syntha"/>
    <property type="match status" value="1"/>
</dbReference>
<dbReference type="SFLD" id="SFLDG01114">
    <property type="entry name" value="phosphomethylpyrimidine_syntha"/>
    <property type="match status" value="1"/>
</dbReference>
<dbReference type="SFLD" id="SFLDS00113">
    <property type="entry name" value="Radical_SAM_Phosphomethylpyrim"/>
    <property type="match status" value="1"/>
</dbReference>
<dbReference type="SUPFAM" id="SSF51391">
    <property type="entry name" value="Thiamin phosphate synthase"/>
    <property type="match status" value="1"/>
</dbReference>
<organism>
    <name type="scientific">Bifidobacterium longum (strain NCC 2705)</name>
    <dbReference type="NCBI Taxonomy" id="206672"/>
    <lineage>
        <taxon>Bacteria</taxon>
        <taxon>Bacillati</taxon>
        <taxon>Actinomycetota</taxon>
        <taxon>Actinomycetes</taxon>
        <taxon>Bifidobacteriales</taxon>
        <taxon>Bifidobacteriaceae</taxon>
        <taxon>Bifidobacterium</taxon>
    </lineage>
</organism>
<accession>Q8G7X1</accession>
<protein>
    <recommendedName>
        <fullName>Thiamine biosynthesis bifunctional protein ThiEC</fullName>
    </recommendedName>
    <domain>
        <recommendedName>
            <fullName>Thiamine-phosphate synthase</fullName>
            <shortName>TMP-PPase</shortName>
            <shortName>TP synthase</shortName>
            <shortName>TPS</shortName>
            <ecNumber evidence="2">2.5.1.3</ecNumber>
        </recommendedName>
        <alternativeName>
            <fullName>Thiamine-phosphate pyrophosphorylase</fullName>
            <shortName>TMP pyrophosphorylase</shortName>
        </alternativeName>
    </domain>
    <domain>
        <recommendedName>
            <fullName>Phosphomethylpyrimidine synthase</fullName>
            <ecNumber evidence="3">4.1.99.17</ecNumber>
        </recommendedName>
        <alternativeName>
            <fullName>Hydroxymethylpyrimidine phosphate synthase</fullName>
            <shortName>HMP-P synthase</shortName>
            <shortName>HMP-phosphate synthase</shortName>
            <shortName>HMPP synthase</shortName>
        </alternativeName>
        <alternativeName>
            <fullName>Thiamine biosynthesis protein ThiC</fullName>
        </alternativeName>
    </domain>
</protein>
<reference key="1">
    <citation type="journal article" date="2002" name="Proc. Natl. Acad. Sci. U.S.A.">
        <title>The genome sequence of Bifidobacterium longum reflects its adaptation to the human gastrointestinal tract.</title>
        <authorList>
            <person name="Schell M.A."/>
            <person name="Karmirantzou M."/>
            <person name="Snel B."/>
            <person name="Vilanova D."/>
            <person name="Berger B."/>
            <person name="Pessi G."/>
            <person name="Zwahlen M.-C."/>
            <person name="Desiere F."/>
            <person name="Bork P."/>
            <person name="Delley M."/>
            <person name="Pridmore R.D."/>
            <person name="Arigoni F."/>
        </authorList>
    </citation>
    <scope>NUCLEOTIDE SEQUENCE [LARGE SCALE GENOMIC DNA]</scope>
    <source>
        <strain>NCC 2705</strain>
    </source>
</reference>
<comment type="function">
    <text evidence="2">Condenses 4-methyl-5-(beta-hydroxyethyl)thiazole monophosphate (THZ-P) and 2-methyl-4-amino-5-hydroxymethyl pyrimidine pyrophosphate (HMP-PP) to form thiamine monophosphate (TMP).</text>
</comment>
<comment type="function">
    <text evidence="3">Catalyzes the synthesis of the hydroxymethylpyrimidine phosphate (HMP-P) moiety of thiamine from aminoimidazole ribotide (AIR) in a radical S-adenosyl-L-methionine (SAM)-dependent reaction.</text>
</comment>
<comment type="catalytic activity">
    <reaction evidence="2">
        <text>2-[(2R,5Z)-2-carboxy-4-methylthiazol-5(2H)-ylidene]ethyl phosphate + 4-amino-2-methyl-5-(diphosphooxymethyl)pyrimidine + 2 H(+) = thiamine phosphate + CO2 + diphosphate</text>
        <dbReference type="Rhea" id="RHEA:47844"/>
        <dbReference type="ChEBI" id="CHEBI:15378"/>
        <dbReference type="ChEBI" id="CHEBI:16526"/>
        <dbReference type="ChEBI" id="CHEBI:33019"/>
        <dbReference type="ChEBI" id="CHEBI:37575"/>
        <dbReference type="ChEBI" id="CHEBI:57841"/>
        <dbReference type="ChEBI" id="CHEBI:62899"/>
        <dbReference type="EC" id="2.5.1.3"/>
    </reaction>
</comment>
<comment type="catalytic activity">
    <reaction evidence="2">
        <text>2-(2-carboxy-4-methylthiazol-5-yl)ethyl phosphate + 4-amino-2-methyl-5-(diphosphooxymethyl)pyrimidine + 2 H(+) = thiamine phosphate + CO2 + diphosphate</text>
        <dbReference type="Rhea" id="RHEA:47848"/>
        <dbReference type="ChEBI" id="CHEBI:15378"/>
        <dbReference type="ChEBI" id="CHEBI:16526"/>
        <dbReference type="ChEBI" id="CHEBI:33019"/>
        <dbReference type="ChEBI" id="CHEBI:37575"/>
        <dbReference type="ChEBI" id="CHEBI:57841"/>
        <dbReference type="ChEBI" id="CHEBI:62890"/>
        <dbReference type="EC" id="2.5.1.3"/>
    </reaction>
</comment>
<comment type="catalytic activity">
    <reaction evidence="2">
        <text>4-methyl-5-(2-phosphooxyethyl)-thiazole + 4-amino-2-methyl-5-(diphosphooxymethyl)pyrimidine + H(+) = thiamine phosphate + diphosphate</text>
        <dbReference type="Rhea" id="RHEA:22328"/>
        <dbReference type="ChEBI" id="CHEBI:15378"/>
        <dbReference type="ChEBI" id="CHEBI:33019"/>
        <dbReference type="ChEBI" id="CHEBI:37575"/>
        <dbReference type="ChEBI" id="CHEBI:57841"/>
        <dbReference type="ChEBI" id="CHEBI:58296"/>
        <dbReference type="EC" id="2.5.1.3"/>
    </reaction>
</comment>
<comment type="catalytic activity">
    <reaction evidence="3">
        <text>5-amino-1-(5-phospho-beta-D-ribosyl)imidazole + S-adenosyl-L-methionine = 4-amino-2-methyl-5-(phosphooxymethyl)pyrimidine + CO + 5'-deoxyadenosine + formate + L-methionine + 3 H(+)</text>
        <dbReference type="Rhea" id="RHEA:24840"/>
        <dbReference type="ChEBI" id="CHEBI:15378"/>
        <dbReference type="ChEBI" id="CHEBI:15740"/>
        <dbReference type="ChEBI" id="CHEBI:17245"/>
        <dbReference type="ChEBI" id="CHEBI:17319"/>
        <dbReference type="ChEBI" id="CHEBI:57844"/>
        <dbReference type="ChEBI" id="CHEBI:58354"/>
        <dbReference type="ChEBI" id="CHEBI:59789"/>
        <dbReference type="ChEBI" id="CHEBI:137981"/>
        <dbReference type="EC" id="4.1.99.17"/>
    </reaction>
</comment>
<comment type="cofactor">
    <cofactor evidence="1">
        <name>[4Fe-4S] cluster</name>
        <dbReference type="ChEBI" id="CHEBI:49883"/>
    </cofactor>
    <text evidence="1">Binds 1 [4Fe-4S] cluster per subunit. The cluster is coordinated with 3 cysteines and an exchangeable S-adenosyl-L-methionine.</text>
</comment>
<comment type="pathway">
    <text>Cofactor biosynthesis; thiamine diphosphate biosynthesis; thiamine phosphate from 4-amino-2-methyl-5-diphosphomethylpyrimidine and 4-methyl-5-(2-phosphoethyl)-thiazole: step 1/1.</text>
</comment>
<comment type="similarity">
    <text evidence="5">In the N-terminal section; belongs to the thiamine-phosphate synthase family.</text>
</comment>
<comment type="similarity">
    <text evidence="5">In the C-terminal section; belongs to the ThiC family.</text>
</comment>
<keyword id="KW-0004">4Fe-4S</keyword>
<keyword id="KW-0408">Iron</keyword>
<keyword id="KW-0411">Iron-sulfur</keyword>
<keyword id="KW-0456">Lyase</keyword>
<keyword id="KW-0460">Magnesium</keyword>
<keyword id="KW-0479">Metal-binding</keyword>
<keyword id="KW-0511">Multifunctional enzyme</keyword>
<keyword id="KW-1185">Reference proteome</keyword>
<keyword id="KW-0949">S-adenosyl-L-methionine</keyword>
<keyword id="KW-0784">Thiamine biosynthesis</keyword>
<keyword id="KW-0808">Transferase</keyword>
<keyword id="KW-0862">Zinc</keyword>
<gene>
    <name type="primary">thiE/thiC</name>
    <name type="ordered locus">BL0114</name>
</gene>